<accession>Q09964</accession>
<accession>Q2PJA8</accession>
<dbReference type="EMBL" id="FO080136">
    <property type="protein sequence ID" value="CCD61501.1"/>
    <property type="molecule type" value="Genomic_DNA"/>
</dbReference>
<dbReference type="PIR" id="G88465">
    <property type="entry name" value="G88465"/>
</dbReference>
<dbReference type="RefSeq" id="NP_001254931.1">
    <property type="nucleotide sequence ID" value="NM_001268002.2"/>
</dbReference>
<dbReference type="SMR" id="Q09964"/>
<dbReference type="FunCoup" id="Q09964">
    <property type="interactions" value="28"/>
</dbReference>
<dbReference type="PaxDb" id="6239-B0244.4b"/>
<dbReference type="EnsemblMetazoa" id="B0244.4a.1">
    <property type="protein sequence ID" value="B0244.4a.1"/>
    <property type="gene ID" value="WBGene00015079"/>
</dbReference>
<dbReference type="GeneID" id="181875"/>
<dbReference type="KEGG" id="cel:CELE_B0244.4"/>
<dbReference type="UCSC" id="B0244.4">
    <property type="organism name" value="c. elegans"/>
</dbReference>
<dbReference type="AGR" id="WB:WBGene00015079"/>
<dbReference type="CTD" id="181875"/>
<dbReference type="WormBase" id="B0244.4a">
    <property type="protein sequence ID" value="CE39466"/>
    <property type="gene ID" value="WBGene00015079"/>
</dbReference>
<dbReference type="eggNOG" id="ENOG502THD0">
    <property type="taxonomic scope" value="Eukaryota"/>
</dbReference>
<dbReference type="GeneTree" id="ENSGT00970000195911"/>
<dbReference type="InParanoid" id="Q09964"/>
<dbReference type="OrthoDB" id="5790882at2759"/>
<dbReference type="PhylomeDB" id="Q09964"/>
<dbReference type="PRO" id="PR:Q09964"/>
<dbReference type="Proteomes" id="UP000001940">
    <property type="component" value="Chromosome III"/>
</dbReference>
<dbReference type="Bgee" id="WBGene00015079">
    <property type="expression patterns" value="Expressed in larva and 1 other cell type or tissue"/>
</dbReference>
<dbReference type="ExpressionAtlas" id="Q09964">
    <property type="expression patterns" value="baseline and differential"/>
</dbReference>
<dbReference type="GO" id="GO:0005886">
    <property type="term" value="C:plasma membrane"/>
    <property type="evidence" value="ECO:0007669"/>
    <property type="project" value="UniProtKB-SubCell"/>
</dbReference>
<dbReference type="GO" id="GO:0004930">
    <property type="term" value="F:G protein-coupled receptor activity"/>
    <property type="evidence" value="ECO:0007669"/>
    <property type="project" value="UniProtKB-KW"/>
</dbReference>
<dbReference type="Gene3D" id="1.20.1070.10">
    <property type="entry name" value="Rhodopsin 7-helix transmembrane proteins"/>
    <property type="match status" value="1"/>
</dbReference>
<dbReference type="InterPro" id="IPR017452">
    <property type="entry name" value="GPCR_Rhodpsn_7TM"/>
</dbReference>
<dbReference type="InterPro" id="IPR040435">
    <property type="entry name" value="Put_GPCR_Chromadorea"/>
</dbReference>
<dbReference type="PANTHER" id="PTHR37441:SF2">
    <property type="entry name" value="G-PROTEIN COUPLED RECEPTOR B0244.10-RELATED"/>
    <property type="match status" value="1"/>
</dbReference>
<dbReference type="PANTHER" id="PTHR37441">
    <property type="entry name" value="PROTEIN CBG16518"/>
    <property type="match status" value="1"/>
</dbReference>
<dbReference type="SUPFAM" id="SSF81321">
    <property type="entry name" value="Family A G protein-coupled receptor-like"/>
    <property type="match status" value="1"/>
</dbReference>
<dbReference type="PROSITE" id="PS50262">
    <property type="entry name" value="G_PROTEIN_RECEP_F1_2"/>
    <property type="match status" value="1"/>
</dbReference>
<evidence type="ECO:0000255" key="1"/>
<evidence type="ECO:0000255" key="2">
    <source>
        <dbReference type="PROSITE-ProRule" id="PRU00521"/>
    </source>
</evidence>
<evidence type="ECO:0000305" key="3"/>
<feature type="chain" id="PRO_0000065050" description="Putative G-protein coupled receptor B0244.4">
    <location>
        <begin position="1"/>
        <end position="309"/>
    </location>
</feature>
<feature type="transmembrane region" description="Helical" evidence="1">
    <location>
        <begin position="39"/>
        <end position="59"/>
    </location>
</feature>
<feature type="transmembrane region" description="Helical" evidence="1">
    <location>
        <begin position="82"/>
        <end position="102"/>
    </location>
</feature>
<feature type="transmembrane region" description="Helical" evidence="1">
    <location>
        <begin position="114"/>
        <end position="134"/>
    </location>
</feature>
<feature type="transmembrane region" description="Helical" evidence="1">
    <location>
        <begin position="162"/>
        <end position="182"/>
    </location>
</feature>
<feature type="transmembrane region" description="Helical" evidence="1">
    <location>
        <begin position="204"/>
        <end position="224"/>
    </location>
</feature>
<feature type="transmembrane region" description="Helical" evidence="1">
    <location>
        <begin position="256"/>
        <end position="276"/>
    </location>
</feature>
<proteinExistence type="inferred from homology"/>
<keyword id="KW-1003">Cell membrane</keyword>
<keyword id="KW-0297">G-protein coupled receptor</keyword>
<keyword id="KW-0472">Membrane</keyword>
<keyword id="KW-0675">Receptor</keyword>
<keyword id="KW-1185">Reference proteome</keyword>
<keyword id="KW-0807">Transducer</keyword>
<keyword id="KW-0812">Transmembrane</keyword>
<keyword id="KW-1133">Transmembrane helix</keyword>
<name>YS94_CAEEL</name>
<gene>
    <name type="ORF">B0244.4</name>
</gene>
<comment type="subcellular location">
    <subcellularLocation>
        <location evidence="3">Cell membrane</location>
        <topology evidence="3">Multi-pass membrane protein</topology>
    </subcellularLocation>
</comment>
<comment type="similarity">
    <text evidence="2">Belongs to the G-protein coupled receptor 1 family. B0244 subfamily.</text>
</comment>
<protein>
    <recommendedName>
        <fullName>Putative G-protein coupled receptor B0244.4</fullName>
    </recommendedName>
</protein>
<reference key="1">
    <citation type="journal article" date="1998" name="Science">
        <title>Genome sequence of the nematode C. elegans: a platform for investigating biology.</title>
        <authorList>
            <consortium name="The C. elegans sequencing consortium"/>
        </authorList>
    </citation>
    <scope>NUCLEOTIDE SEQUENCE [LARGE SCALE GENOMIC DNA]</scope>
    <source>
        <strain>Bristol N2</strain>
    </source>
</reference>
<organism>
    <name type="scientific">Caenorhabditis elegans</name>
    <dbReference type="NCBI Taxonomy" id="6239"/>
    <lineage>
        <taxon>Eukaryota</taxon>
        <taxon>Metazoa</taxon>
        <taxon>Ecdysozoa</taxon>
        <taxon>Nematoda</taxon>
        <taxon>Chromadorea</taxon>
        <taxon>Rhabditida</taxon>
        <taxon>Rhabditina</taxon>
        <taxon>Rhabditomorpha</taxon>
        <taxon>Rhabditoidea</taxon>
        <taxon>Rhabditidae</taxon>
        <taxon>Peloderinae</taxon>
        <taxon>Caenorhabditis</taxon>
    </lineage>
</organism>
<sequence length="309" mass="35067">MANIFENCSYHSPYEPYYLNCTNTTNQCTLVQDVETIESIIFWIDFLIPCTLFVVACFLNAYYLSILVPEFTEMNDITKKQYIFMVSRAISALTACVIMLALRILQLITSSFTIYFLFFLIDDLSFYSLLGSYVGSAILLYLATIRPILYSNRISVRTVYKFAIANLITSVVLAITTAMFQAADLSDGPFQCDLKHCQPITNMIMLVLILTSFLIPIVTLSFVLVTLCFYKNRSESIGDFTTDNSVSKSARTRLAWTLFTFTLITLTEAIPSFYLVGTSIGQLLSTWILCAHCYSIPEYEKFGYNIQKS</sequence>